<dbReference type="EC" id="2.4.1.18" evidence="1"/>
<dbReference type="EMBL" id="CP000266">
    <property type="protein sequence ID" value="ABF05483.1"/>
    <property type="molecule type" value="Genomic_DNA"/>
</dbReference>
<dbReference type="RefSeq" id="WP_001283719.1">
    <property type="nucleotide sequence ID" value="NC_008258.1"/>
</dbReference>
<dbReference type="SMR" id="Q0SZN2"/>
<dbReference type="CAZy" id="CBM48">
    <property type="family name" value="Carbohydrate-Binding Module Family 48"/>
</dbReference>
<dbReference type="CAZy" id="GH13">
    <property type="family name" value="Glycoside Hydrolase Family 13"/>
</dbReference>
<dbReference type="KEGG" id="sfv:SFV_3441"/>
<dbReference type="HOGENOM" id="CLU_004245_3_2_6"/>
<dbReference type="UniPathway" id="UPA00164"/>
<dbReference type="Proteomes" id="UP000000659">
    <property type="component" value="Chromosome"/>
</dbReference>
<dbReference type="GO" id="GO:0005829">
    <property type="term" value="C:cytosol"/>
    <property type="evidence" value="ECO:0007669"/>
    <property type="project" value="TreeGrafter"/>
</dbReference>
<dbReference type="GO" id="GO:0003844">
    <property type="term" value="F:1,4-alpha-glucan branching enzyme activity"/>
    <property type="evidence" value="ECO:0007669"/>
    <property type="project" value="UniProtKB-UniRule"/>
</dbReference>
<dbReference type="GO" id="GO:0043169">
    <property type="term" value="F:cation binding"/>
    <property type="evidence" value="ECO:0007669"/>
    <property type="project" value="InterPro"/>
</dbReference>
<dbReference type="GO" id="GO:0004553">
    <property type="term" value="F:hydrolase activity, hydrolyzing O-glycosyl compounds"/>
    <property type="evidence" value="ECO:0007669"/>
    <property type="project" value="InterPro"/>
</dbReference>
<dbReference type="GO" id="GO:0005978">
    <property type="term" value="P:glycogen biosynthetic process"/>
    <property type="evidence" value="ECO:0007669"/>
    <property type="project" value="UniProtKB-UniRule"/>
</dbReference>
<dbReference type="CDD" id="cd11322">
    <property type="entry name" value="AmyAc_Glg_BE"/>
    <property type="match status" value="1"/>
</dbReference>
<dbReference type="CDD" id="cd02855">
    <property type="entry name" value="E_set_GBE_prok_N"/>
    <property type="match status" value="1"/>
</dbReference>
<dbReference type="FunFam" id="2.60.40.10:FF:000169">
    <property type="entry name" value="1,4-alpha-glucan branching enzyme GlgB"/>
    <property type="match status" value="1"/>
</dbReference>
<dbReference type="FunFam" id="2.60.40.10:FF:000331">
    <property type="entry name" value="1,4-alpha-glucan branching enzyme GlgB"/>
    <property type="match status" value="1"/>
</dbReference>
<dbReference type="FunFam" id="2.60.40.1180:FF:000002">
    <property type="entry name" value="1,4-alpha-glucan branching enzyme GlgB"/>
    <property type="match status" value="1"/>
</dbReference>
<dbReference type="FunFam" id="3.20.20.80:FF:000003">
    <property type="entry name" value="1,4-alpha-glucan branching enzyme GlgB"/>
    <property type="match status" value="1"/>
</dbReference>
<dbReference type="Gene3D" id="3.20.20.80">
    <property type="entry name" value="Glycosidases"/>
    <property type="match status" value="1"/>
</dbReference>
<dbReference type="Gene3D" id="2.60.40.1180">
    <property type="entry name" value="Golgi alpha-mannosidase II"/>
    <property type="match status" value="1"/>
</dbReference>
<dbReference type="Gene3D" id="2.60.40.10">
    <property type="entry name" value="Immunoglobulins"/>
    <property type="match status" value="2"/>
</dbReference>
<dbReference type="HAMAP" id="MF_00685">
    <property type="entry name" value="GlgB"/>
    <property type="match status" value="1"/>
</dbReference>
<dbReference type="InterPro" id="IPR006048">
    <property type="entry name" value="A-amylase/branching_C"/>
</dbReference>
<dbReference type="InterPro" id="IPR037439">
    <property type="entry name" value="Branching_enzy"/>
</dbReference>
<dbReference type="InterPro" id="IPR006407">
    <property type="entry name" value="GlgB"/>
</dbReference>
<dbReference type="InterPro" id="IPR054169">
    <property type="entry name" value="GlgB_N"/>
</dbReference>
<dbReference type="InterPro" id="IPR044143">
    <property type="entry name" value="GlgB_N_E_set_prok"/>
</dbReference>
<dbReference type="InterPro" id="IPR006047">
    <property type="entry name" value="Glyco_hydro_13_cat_dom"/>
</dbReference>
<dbReference type="InterPro" id="IPR004193">
    <property type="entry name" value="Glyco_hydro_13_N"/>
</dbReference>
<dbReference type="InterPro" id="IPR013780">
    <property type="entry name" value="Glyco_hydro_b"/>
</dbReference>
<dbReference type="InterPro" id="IPR017853">
    <property type="entry name" value="Glycoside_hydrolase_SF"/>
</dbReference>
<dbReference type="InterPro" id="IPR013783">
    <property type="entry name" value="Ig-like_fold"/>
</dbReference>
<dbReference type="InterPro" id="IPR014756">
    <property type="entry name" value="Ig_E-set"/>
</dbReference>
<dbReference type="NCBIfam" id="TIGR01515">
    <property type="entry name" value="branching_enzym"/>
    <property type="match status" value="1"/>
</dbReference>
<dbReference type="NCBIfam" id="NF003811">
    <property type="entry name" value="PRK05402.1"/>
    <property type="match status" value="1"/>
</dbReference>
<dbReference type="NCBIfam" id="NF008967">
    <property type="entry name" value="PRK12313.1"/>
    <property type="match status" value="1"/>
</dbReference>
<dbReference type="PANTHER" id="PTHR43651">
    <property type="entry name" value="1,4-ALPHA-GLUCAN-BRANCHING ENZYME"/>
    <property type="match status" value="1"/>
</dbReference>
<dbReference type="PANTHER" id="PTHR43651:SF3">
    <property type="entry name" value="1,4-ALPHA-GLUCAN-BRANCHING ENZYME"/>
    <property type="match status" value="1"/>
</dbReference>
<dbReference type="Pfam" id="PF00128">
    <property type="entry name" value="Alpha-amylase"/>
    <property type="match status" value="1"/>
</dbReference>
<dbReference type="Pfam" id="PF02806">
    <property type="entry name" value="Alpha-amylase_C"/>
    <property type="match status" value="1"/>
</dbReference>
<dbReference type="Pfam" id="PF02922">
    <property type="entry name" value="CBM_48"/>
    <property type="match status" value="1"/>
</dbReference>
<dbReference type="Pfam" id="PF22019">
    <property type="entry name" value="GlgB_N"/>
    <property type="match status" value="1"/>
</dbReference>
<dbReference type="PIRSF" id="PIRSF000463">
    <property type="entry name" value="GlgB"/>
    <property type="match status" value="1"/>
</dbReference>
<dbReference type="SMART" id="SM00642">
    <property type="entry name" value="Aamy"/>
    <property type="match status" value="1"/>
</dbReference>
<dbReference type="SUPFAM" id="SSF51445">
    <property type="entry name" value="(Trans)glycosidases"/>
    <property type="match status" value="1"/>
</dbReference>
<dbReference type="SUPFAM" id="SSF81296">
    <property type="entry name" value="E set domains"/>
    <property type="match status" value="2"/>
</dbReference>
<dbReference type="SUPFAM" id="SSF51011">
    <property type="entry name" value="Glycosyl hydrolase domain"/>
    <property type="match status" value="1"/>
</dbReference>
<comment type="function">
    <text evidence="1">Catalyzes the formation of the alpha-1,6-glucosidic linkages in glycogen by scission of a 1,4-alpha-linked oligosaccharide from growing alpha-1,4-glucan chains and the subsequent attachment of the oligosaccharide to the alpha-1,6 position.</text>
</comment>
<comment type="catalytic activity">
    <reaction evidence="1">
        <text>Transfers a segment of a (1-&gt;4)-alpha-D-glucan chain to a primary hydroxy group in a similar glucan chain.</text>
        <dbReference type="EC" id="2.4.1.18"/>
    </reaction>
</comment>
<comment type="pathway">
    <text evidence="1">Glycan biosynthesis; glycogen biosynthesis.</text>
</comment>
<comment type="subunit">
    <text evidence="1">Monomer.</text>
</comment>
<comment type="similarity">
    <text evidence="1">Belongs to the glycosyl hydrolase 13 family. GlgB subfamily.</text>
</comment>
<protein>
    <recommendedName>
        <fullName evidence="1">1,4-alpha-glucan branching enzyme GlgB</fullName>
        <ecNumber evidence="1">2.4.1.18</ecNumber>
    </recommendedName>
    <alternativeName>
        <fullName evidence="1">1,4-alpha-D-glucan:1,4-alpha-D-glucan 6-glucosyl-transferase</fullName>
    </alternativeName>
    <alternativeName>
        <fullName evidence="1">Alpha-(1-&gt;4)-glucan branching enzyme</fullName>
    </alternativeName>
    <alternativeName>
        <fullName evidence="1">Glycogen branching enzyme</fullName>
        <shortName evidence="1">BE</shortName>
    </alternativeName>
</protein>
<keyword id="KW-0119">Carbohydrate metabolism</keyword>
<keyword id="KW-0320">Glycogen biosynthesis</keyword>
<keyword id="KW-0321">Glycogen metabolism</keyword>
<keyword id="KW-0328">Glycosyltransferase</keyword>
<keyword id="KW-0808">Transferase</keyword>
<name>GLGB_SHIF8</name>
<organism>
    <name type="scientific">Shigella flexneri serotype 5b (strain 8401)</name>
    <dbReference type="NCBI Taxonomy" id="373384"/>
    <lineage>
        <taxon>Bacteria</taxon>
        <taxon>Pseudomonadati</taxon>
        <taxon>Pseudomonadota</taxon>
        <taxon>Gammaproteobacteria</taxon>
        <taxon>Enterobacterales</taxon>
        <taxon>Enterobacteriaceae</taxon>
        <taxon>Shigella</taxon>
    </lineage>
</organism>
<sequence length="728" mass="84338">MSDRIDRDVINALIAGHFADPFSVLGMHKTTAGLEVRALLPDATDVWVIEPKTGRKLAKLECLDSRGFFSGVIPRRKNFFRYQLAVVWHGQQNLIDDPYRFGPLIQEMDAWLLSEGTHLRPYETLGAHADTMDGVTGTRFSVWAPNARRVSVVGQFNYWDGRRHPMRLRKESGIWELFIPGAHNGQLYKYEMIDANGNLRLKSDPYAFEAQMRPETASLICGLPEKVVQTEERKKANQFDAPISIYEVHLGSWRRHTDNNFWLSYRELADQLVPYAKWMGFTHLELLPINEHPFDGSWGYQPTGLYAPTRRFGTRDDFRYFIDAAHAAGLNVILDWVPGHFPTDDFALAEFDGTNLYEHSDPREGYHQDWNTLIYNYGRREVSNFLVGNALYWIERFGIDALRVDAVASMIYRDYSRKEGEWIPNEFGGRENLEAIEFLRNTNRILGEQVSGAVTMAEESTDFPGVSRPQDMGGLGFWYKWNLGWMHDTLDYMKLDPIYRQYHHDKLTFGMLYNYTENFVLPLSHDEVVHGKKSILDRMPGDAWQKFASLRAYYGWMWAFPGKKLLFMGNEFAQAREWNHDASLDWHLLEGGDNWHHGVQRLVRDLNLTYRHHKAMHELDFDPYGFEWLVVDDKERSVLIFVRRDKEGNEIIVASNFTPVPRHDYRFGINQPGKWREILNTDSIHYHGSNAGNGGTVHSDEIASHGRQHSLSLTLPPLATIWLVREAE</sequence>
<feature type="chain" id="PRO_1000045001" description="1,4-alpha-glucan branching enzyme GlgB">
    <location>
        <begin position="1"/>
        <end position="728"/>
    </location>
</feature>
<feature type="active site" description="Nucleophile" evidence="1">
    <location>
        <position position="405"/>
    </location>
</feature>
<feature type="active site" description="Proton donor" evidence="1">
    <location>
        <position position="458"/>
    </location>
</feature>
<evidence type="ECO:0000255" key="1">
    <source>
        <dbReference type="HAMAP-Rule" id="MF_00685"/>
    </source>
</evidence>
<gene>
    <name evidence="1" type="primary">glgB</name>
    <name type="ordered locus">SFV_3441</name>
</gene>
<proteinExistence type="inferred from homology"/>
<reference key="1">
    <citation type="journal article" date="2006" name="BMC Genomics">
        <title>Complete genome sequence of Shigella flexneri 5b and comparison with Shigella flexneri 2a.</title>
        <authorList>
            <person name="Nie H."/>
            <person name="Yang F."/>
            <person name="Zhang X."/>
            <person name="Yang J."/>
            <person name="Chen L."/>
            <person name="Wang J."/>
            <person name="Xiong Z."/>
            <person name="Peng J."/>
            <person name="Sun L."/>
            <person name="Dong J."/>
            <person name="Xue Y."/>
            <person name="Xu X."/>
            <person name="Chen S."/>
            <person name="Yao Z."/>
            <person name="Shen Y."/>
            <person name="Jin Q."/>
        </authorList>
    </citation>
    <scope>NUCLEOTIDE SEQUENCE [LARGE SCALE GENOMIC DNA]</scope>
    <source>
        <strain>8401</strain>
    </source>
</reference>
<accession>Q0SZN2</accession>